<reference key="1">
    <citation type="journal article" date="2001" name="Proc. Natl. Acad. Sci. U.S.A.">
        <title>Genome sequence of an industrial microorganism Streptomyces avermitilis: deducing the ability of producing secondary metabolites.</title>
        <authorList>
            <person name="Omura S."/>
            <person name="Ikeda H."/>
            <person name="Ishikawa J."/>
            <person name="Hanamoto A."/>
            <person name="Takahashi C."/>
            <person name="Shinose M."/>
            <person name="Takahashi Y."/>
            <person name="Horikawa H."/>
            <person name="Nakazawa H."/>
            <person name="Osonoe T."/>
            <person name="Kikuchi H."/>
            <person name="Shiba T."/>
            <person name="Sakaki Y."/>
            <person name="Hattori M."/>
        </authorList>
    </citation>
    <scope>NUCLEOTIDE SEQUENCE [LARGE SCALE GENOMIC DNA]</scope>
    <source>
        <strain>ATCC 31267 / DSM 46492 / JCM 5070 / NBRC 14893 / NCIMB 12804 / NRRL 8165 / MA-4680</strain>
    </source>
</reference>
<reference key="2">
    <citation type="journal article" date="2003" name="Nat. Biotechnol.">
        <title>Complete genome sequence and comparative analysis of the industrial microorganism Streptomyces avermitilis.</title>
        <authorList>
            <person name="Ikeda H."/>
            <person name="Ishikawa J."/>
            <person name="Hanamoto A."/>
            <person name="Shinose M."/>
            <person name="Kikuchi H."/>
            <person name="Shiba T."/>
            <person name="Sakaki Y."/>
            <person name="Hattori M."/>
            <person name="Omura S."/>
        </authorList>
    </citation>
    <scope>NUCLEOTIDE SEQUENCE [LARGE SCALE GENOMIC DNA]</scope>
    <source>
        <strain>ATCC 31267 / DSM 46492 / JCM 5070 / NBRC 14893 / NCIMB 12804 / NRRL 8165 / MA-4680</strain>
    </source>
</reference>
<accession>Q82AG5</accession>
<gene>
    <name evidence="1" type="primary">thiG</name>
    <name type="ordered locus">SAV_6093</name>
</gene>
<protein>
    <recommendedName>
        <fullName evidence="1">Thiazole synthase</fullName>
        <ecNumber evidence="1">2.8.1.10</ecNumber>
    </recommendedName>
</protein>
<dbReference type="EC" id="2.8.1.10" evidence="1"/>
<dbReference type="EMBL" id="BA000030">
    <property type="protein sequence ID" value="BAC73804.1"/>
    <property type="molecule type" value="Genomic_DNA"/>
</dbReference>
<dbReference type="RefSeq" id="WP_010987494.1">
    <property type="nucleotide sequence ID" value="NZ_JZJK01000089.1"/>
</dbReference>
<dbReference type="SMR" id="Q82AG5"/>
<dbReference type="GeneID" id="41543170"/>
<dbReference type="KEGG" id="sma:SAVERM_6093"/>
<dbReference type="eggNOG" id="COG2022">
    <property type="taxonomic scope" value="Bacteria"/>
</dbReference>
<dbReference type="HOGENOM" id="CLU_062233_1_0_11"/>
<dbReference type="OrthoDB" id="9805935at2"/>
<dbReference type="UniPathway" id="UPA00060"/>
<dbReference type="Proteomes" id="UP000000428">
    <property type="component" value="Chromosome"/>
</dbReference>
<dbReference type="GO" id="GO:0005737">
    <property type="term" value="C:cytoplasm"/>
    <property type="evidence" value="ECO:0007669"/>
    <property type="project" value="UniProtKB-SubCell"/>
</dbReference>
<dbReference type="GO" id="GO:1990107">
    <property type="term" value="F:thiazole synthase activity"/>
    <property type="evidence" value="ECO:0007669"/>
    <property type="project" value="UniProtKB-EC"/>
</dbReference>
<dbReference type="GO" id="GO:0009229">
    <property type="term" value="P:thiamine diphosphate biosynthetic process"/>
    <property type="evidence" value="ECO:0007669"/>
    <property type="project" value="UniProtKB-UniRule"/>
</dbReference>
<dbReference type="CDD" id="cd04728">
    <property type="entry name" value="ThiG"/>
    <property type="match status" value="1"/>
</dbReference>
<dbReference type="Gene3D" id="3.20.20.70">
    <property type="entry name" value="Aldolase class I"/>
    <property type="match status" value="1"/>
</dbReference>
<dbReference type="HAMAP" id="MF_00443">
    <property type="entry name" value="ThiG"/>
    <property type="match status" value="1"/>
</dbReference>
<dbReference type="InterPro" id="IPR013785">
    <property type="entry name" value="Aldolase_TIM"/>
</dbReference>
<dbReference type="InterPro" id="IPR033983">
    <property type="entry name" value="Thiazole_synthase_ThiG"/>
</dbReference>
<dbReference type="InterPro" id="IPR008867">
    <property type="entry name" value="ThiG"/>
</dbReference>
<dbReference type="PANTHER" id="PTHR34266">
    <property type="entry name" value="THIAZOLE SYNTHASE"/>
    <property type="match status" value="1"/>
</dbReference>
<dbReference type="PANTHER" id="PTHR34266:SF2">
    <property type="entry name" value="THIAZOLE SYNTHASE"/>
    <property type="match status" value="1"/>
</dbReference>
<dbReference type="Pfam" id="PF05690">
    <property type="entry name" value="ThiG"/>
    <property type="match status" value="1"/>
</dbReference>
<dbReference type="SUPFAM" id="SSF110399">
    <property type="entry name" value="ThiG-like"/>
    <property type="match status" value="1"/>
</dbReference>
<organism>
    <name type="scientific">Streptomyces avermitilis (strain ATCC 31267 / DSM 46492 / JCM 5070 / NBRC 14893 / NCIMB 12804 / NRRL 8165 / MA-4680)</name>
    <dbReference type="NCBI Taxonomy" id="227882"/>
    <lineage>
        <taxon>Bacteria</taxon>
        <taxon>Bacillati</taxon>
        <taxon>Actinomycetota</taxon>
        <taxon>Actinomycetes</taxon>
        <taxon>Kitasatosporales</taxon>
        <taxon>Streptomycetaceae</taxon>
        <taxon>Streptomyces</taxon>
    </lineage>
</organism>
<evidence type="ECO:0000255" key="1">
    <source>
        <dbReference type="HAMAP-Rule" id="MF_00443"/>
    </source>
</evidence>
<evidence type="ECO:0000256" key="2">
    <source>
        <dbReference type="SAM" id="MobiDB-lite"/>
    </source>
</evidence>
<keyword id="KW-0963">Cytoplasm</keyword>
<keyword id="KW-1185">Reference proteome</keyword>
<keyword id="KW-0704">Schiff base</keyword>
<keyword id="KW-0784">Thiamine biosynthesis</keyword>
<keyword id="KW-0808">Transferase</keyword>
<comment type="function">
    <text evidence="1">Catalyzes the rearrangement of 1-deoxy-D-xylulose 5-phosphate (DXP) to produce the thiazole phosphate moiety of thiamine. Sulfur is provided by the thiocarboxylate moiety of the carrier protein ThiS. In vitro, sulfur can be provided by H(2)S.</text>
</comment>
<comment type="catalytic activity">
    <reaction evidence="1">
        <text>[ThiS sulfur-carrier protein]-C-terminal-Gly-aminoethanethioate + 2-iminoacetate + 1-deoxy-D-xylulose 5-phosphate = [ThiS sulfur-carrier protein]-C-terminal Gly-Gly + 2-[(2R,5Z)-2-carboxy-4-methylthiazol-5(2H)-ylidene]ethyl phosphate + 2 H2O + H(+)</text>
        <dbReference type="Rhea" id="RHEA:26297"/>
        <dbReference type="Rhea" id="RHEA-COMP:12909"/>
        <dbReference type="Rhea" id="RHEA-COMP:19908"/>
        <dbReference type="ChEBI" id="CHEBI:15377"/>
        <dbReference type="ChEBI" id="CHEBI:15378"/>
        <dbReference type="ChEBI" id="CHEBI:57792"/>
        <dbReference type="ChEBI" id="CHEBI:62899"/>
        <dbReference type="ChEBI" id="CHEBI:77846"/>
        <dbReference type="ChEBI" id="CHEBI:90778"/>
        <dbReference type="ChEBI" id="CHEBI:232372"/>
        <dbReference type="EC" id="2.8.1.10"/>
    </reaction>
</comment>
<comment type="pathway">
    <text evidence="1">Cofactor biosynthesis; thiamine diphosphate biosynthesis.</text>
</comment>
<comment type="subunit">
    <text evidence="1">Homotetramer. Forms heterodimers with either ThiH or ThiS.</text>
</comment>
<comment type="subcellular location">
    <subcellularLocation>
        <location evidence="1">Cytoplasm</location>
    </subcellularLocation>
</comment>
<comment type="similarity">
    <text evidence="1">Belongs to the ThiG family.</text>
</comment>
<name>THIG_STRAW</name>
<proteinExistence type="inferred from homology"/>
<feature type="chain" id="PRO_0000162862" description="Thiazole synthase">
    <location>
        <begin position="1"/>
        <end position="264"/>
    </location>
</feature>
<feature type="region of interest" description="Disordered" evidence="2">
    <location>
        <begin position="243"/>
        <end position="264"/>
    </location>
</feature>
<feature type="compositionally biased region" description="Basic and acidic residues" evidence="2">
    <location>
        <begin position="253"/>
        <end position="264"/>
    </location>
</feature>
<feature type="active site" description="Schiff-base intermediate with DXP" evidence="1">
    <location>
        <position position="98"/>
    </location>
</feature>
<feature type="binding site" evidence="1">
    <location>
        <position position="159"/>
    </location>
    <ligand>
        <name>1-deoxy-D-xylulose 5-phosphate</name>
        <dbReference type="ChEBI" id="CHEBI:57792"/>
    </ligand>
</feature>
<feature type="binding site" evidence="1">
    <location>
        <begin position="185"/>
        <end position="186"/>
    </location>
    <ligand>
        <name>1-deoxy-D-xylulose 5-phosphate</name>
        <dbReference type="ChEBI" id="CHEBI:57792"/>
    </ligand>
</feature>
<feature type="binding site" evidence="1">
    <location>
        <begin position="207"/>
        <end position="208"/>
    </location>
    <ligand>
        <name>1-deoxy-D-xylulose 5-phosphate</name>
        <dbReference type="ChEBI" id="CHEBI:57792"/>
    </ligand>
</feature>
<sequence>MADDPFVLGDTPFSSRLIMGTGGAPSLDILERALVASGTELTTVAMRRVDAGVHGSVLSVLDRLGIRVLPNTAGCFTAGEAVLTARLAREALGTDLIKLEVIADERTLLPDPIELLDAAETLVDDGFTVLPYTNDDPVLARKLEDVGCAAVMPLGSPIGSGLGIRNPHNFQLIVEHARVPVILDAGAGTASDVALAMELGCAGVMLASAVTRAQEPVLMAEGMRHAVDAGRLAYRAGRIPRRHFAEASSPPEGRAHLDPERPAF</sequence>